<accession>Q9JYN5</accession>
<evidence type="ECO:0000255" key="1">
    <source>
        <dbReference type="HAMAP-Rule" id="MF_00564"/>
    </source>
</evidence>
<comment type="function">
    <text evidence="1">Phosphorolytic 3'-5' exoribonuclease that plays an important role in tRNA 3'-end maturation. Removes nucleotide residues following the 3'-CCA terminus of tRNAs; can also add nucleotides to the ends of RNA molecules by using nucleoside diphosphates as substrates, but this may not be physiologically important. Probably plays a role in initiation of 16S rRNA degradation (leading to ribosome degradation) during starvation.</text>
</comment>
<comment type="catalytic activity">
    <reaction evidence="1">
        <text>tRNA(n+1) + phosphate = tRNA(n) + a ribonucleoside 5'-diphosphate</text>
        <dbReference type="Rhea" id="RHEA:10628"/>
        <dbReference type="Rhea" id="RHEA-COMP:17343"/>
        <dbReference type="Rhea" id="RHEA-COMP:17344"/>
        <dbReference type="ChEBI" id="CHEBI:43474"/>
        <dbReference type="ChEBI" id="CHEBI:57930"/>
        <dbReference type="ChEBI" id="CHEBI:173114"/>
        <dbReference type="EC" id="2.7.7.56"/>
    </reaction>
</comment>
<comment type="subunit">
    <text evidence="1">Homohexameric ring arranged as a trimer of dimers.</text>
</comment>
<comment type="similarity">
    <text evidence="1">Belongs to the RNase PH family.</text>
</comment>
<organism>
    <name type="scientific">Neisseria meningitidis serogroup B (strain ATCC BAA-335 / MC58)</name>
    <dbReference type="NCBI Taxonomy" id="122586"/>
    <lineage>
        <taxon>Bacteria</taxon>
        <taxon>Pseudomonadati</taxon>
        <taxon>Pseudomonadota</taxon>
        <taxon>Betaproteobacteria</taxon>
        <taxon>Neisseriales</taxon>
        <taxon>Neisseriaceae</taxon>
        <taxon>Neisseria</taxon>
    </lineage>
</organism>
<name>RNPH_NEIMB</name>
<keyword id="KW-0548">Nucleotidyltransferase</keyword>
<keyword id="KW-1185">Reference proteome</keyword>
<keyword id="KW-0694">RNA-binding</keyword>
<keyword id="KW-0698">rRNA processing</keyword>
<keyword id="KW-0808">Transferase</keyword>
<keyword id="KW-0819">tRNA processing</keyword>
<keyword id="KW-0820">tRNA-binding</keyword>
<gene>
    <name evidence="1" type="primary">rph</name>
    <name type="ordered locus">NMB1499</name>
</gene>
<reference key="1">
    <citation type="journal article" date="2000" name="Science">
        <title>Complete genome sequence of Neisseria meningitidis serogroup B strain MC58.</title>
        <authorList>
            <person name="Tettelin H."/>
            <person name="Saunders N.J."/>
            <person name="Heidelberg J.F."/>
            <person name="Jeffries A.C."/>
            <person name="Nelson K.E."/>
            <person name="Eisen J.A."/>
            <person name="Ketchum K.A."/>
            <person name="Hood D.W."/>
            <person name="Peden J.F."/>
            <person name="Dodson R.J."/>
            <person name="Nelson W.C."/>
            <person name="Gwinn M.L."/>
            <person name="DeBoy R.T."/>
            <person name="Peterson J.D."/>
            <person name="Hickey E.K."/>
            <person name="Haft D.H."/>
            <person name="Salzberg S.L."/>
            <person name="White O."/>
            <person name="Fleischmann R.D."/>
            <person name="Dougherty B.A."/>
            <person name="Mason T.M."/>
            <person name="Ciecko A."/>
            <person name="Parksey D.S."/>
            <person name="Blair E."/>
            <person name="Cittone H."/>
            <person name="Clark E.B."/>
            <person name="Cotton M.D."/>
            <person name="Utterback T.R."/>
            <person name="Khouri H.M."/>
            <person name="Qin H."/>
            <person name="Vamathevan J.J."/>
            <person name="Gill J."/>
            <person name="Scarlato V."/>
            <person name="Masignani V."/>
            <person name="Pizza M."/>
            <person name="Grandi G."/>
            <person name="Sun L."/>
            <person name="Smith H.O."/>
            <person name="Fraser C.M."/>
            <person name="Moxon E.R."/>
            <person name="Rappuoli R."/>
            <person name="Venter J.C."/>
        </authorList>
    </citation>
    <scope>NUCLEOTIDE SEQUENCE [LARGE SCALE GENOMIC DNA]</scope>
    <source>
        <strain>ATCC BAA-335 / MC58</strain>
    </source>
</reference>
<dbReference type="EC" id="2.7.7.56" evidence="1"/>
<dbReference type="EMBL" id="AE002098">
    <property type="protein sequence ID" value="AAF41855.1"/>
    <property type="molecule type" value="Genomic_DNA"/>
</dbReference>
<dbReference type="PIR" id="G81076">
    <property type="entry name" value="G81076"/>
</dbReference>
<dbReference type="RefSeq" id="NP_274507.1">
    <property type="nucleotide sequence ID" value="NC_003112.2"/>
</dbReference>
<dbReference type="RefSeq" id="WP_002225077.1">
    <property type="nucleotide sequence ID" value="NC_003112.2"/>
</dbReference>
<dbReference type="SMR" id="Q9JYN5"/>
<dbReference type="FunCoup" id="Q9JYN5">
    <property type="interactions" value="409"/>
</dbReference>
<dbReference type="STRING" id="122586.NMB1499"/>
<dbReference type="PaxDb" id="122586-NMB1499"/>
<dbReference type="KEGG" id="nme:NMB1499"/>
<dbReference type="PATRIC" id="fig|122586.8.peg.1900"/>
<dbReference type="HOGENOM" id="CLU_050858_0_0_4"/>
<dbReference type="InParanoid" id="Q9JYN5"/>
<dbReference type="OrthoDB" id="9802265at2"/>
<dbReference type="Proteomes" id="UP000000425">
    <property type="component" value="Chromosome"/>
</dbReference>
<dbReference type="GO" id="GO:0000175">
    <property type="term" value="F:3'-5'-RNA exonuclease activity"/>
    <property type="evidence" value="ECO:0007669"/>
    <property type="project" value="UniProtKB-UniRule"/>
</dbReference>
<dbReference type="GO" id="GO:0003723">
    <property type="term" value="F:RNA binding"/>
    <property type="evidence" value="ECO:0000318"/>
    <property type="project" value="GO_Central"/>
</dbReference>
<dbReference type="GO" id="GO:0000049">
    <property type="term" value="F:tRNA binding"/>
    <property type="evidence" value="ECO:0007669"/>
    <property type="project" value="UniProtKB-UniRule"/>
</dbReference>
<dbReference type="GO" id="GO:0009022">
    <property type="term" value="F:tRNA nucleotidyltransferase activity"/>
    <property type="evidence" value="ECO:0007669"/>
    <property type="project" value="UniProtKB-UniRule"/>
</dbReference>
<dbReference type="GO" id="GO:0016075">
    <property type="term" value="P:rRNA catabolic process"/>
    <property type="evidence" value="ECO:0000318"/>
    <property type="project" value="GO_Central"/>
</dbReference>
<dbReference type="GO" id="GO:0006364">
    <property type="term" value="P:rRNA processing"/>
    <property type="evidence" value="ECO:0007669"/>
    <property type="project" value="UniProtKB-KW"/>
</dbReference>
<dbReference type="GO" id="GO:0008033">
    <property type="term" value="P:tRNA processing"/>
    <property type="evidence" value="ECO:0007669"/>
    <property type="project" value="UniProtKB-UniRule"/>
</dbReference>
<dbReference type="CDD" id="cd11362">
    <property type="entry name" value="RNase_PH_bact"/>
    <property type="match status" value="1"/>
</dbReference>
<dbReference type="FunFam" id="3.30.230.70:FF:000003">
    <property type="entry name" value="Ribonuclease PH"/>
    <property type="match status" value="1"/>
</dbReference>
<dbReference type="Gene3D" id="3.30.230.70">
    <property type="entry name" value="GHMP Kinase, N-terminal domain"/>
    <property type="match status" value="1"/>
</dbReference>
<dbReference type="HAMAP" id="MF_00564">
    <property type="entry name" value="RNase_PH"/>
    <property type="match status" value="1"/>
</dbReference>
<dbReference type="InterPro" id="IPR001247">
    <property type="entry name" value="ExoRNase_PH_dom1"/>
</dbReference>
<dbReference type="InterPro" id="IPR015847">
    <property type="entry name" value="ExoRNase_PH_dom2"/>
</dbReference>
<dbReference type="InterPro" id="IPR036345">
    <property type="entry name" value="ExoRNase_PH_dom2_sf"/>
</dbReference>
<dbReference type="InterPro" id="IPR027408">
    <property type="entry name" value="PNPase/RNase_PH_dom_sf"/>
</dbReference>
<dbReference type="InterPro" id="IPR020568">
    <property type="entry name" value="Ribosomal_Su5_D2-typ_SF"/>
</dbReference>
<dbReference type="InterPro" id="IPR050080">
    <property type="entry name" value="RNase_PH"/>
</dbReference>
<dbReference type="InterPro" id="IPR002381">
    <property type="entry name" value="RNase_PH_bac-type"/>
</dbReference>
<dbReference type="InterPro" id="IPR018336">
    <property type="entry name" value="RNase_PH_CS"/>
</dbReference>
<dbReference type="NCBIfam" id="TIGR01966">
    <property type="entry name" value="RNasePH"/>
    <property type="match status" value="1"/>
</dbReference>
<dbReference type="PANTHER" id="PTHR11953">
    <property type="entry name" value="EXOSOME COMPLEX COMPONENT"/>
    <property type="match status" value="1"/>
</dbReference>
<dbReference type="PANTHER" id="PTHR11953:SF0">
    <property type="entry name" value="EXOSOME COMPLEX COMPONENT RRP41"/>
    <property type="match status" value="1"/>
</dbReference>
<dbReference type="Pfam" id="PF01138">
    <property type="entry name" value="RNase_PH"/>
    <property type="match status" value="1"/>
</dbReference>
<dbReference type="Pfam" id="PF03725">
    <property type="entry name" value="RNase_PH_C"/>
    <property type="match status" value="1"/>
</dbReference>
<dbReference type="SUPFAM" id="SSF55666">
    <property type="entry name" value="Ribonuclease PH domain 2-like"/>
    <property type="match status" value="1"/>
</dbReference>
<dbReference type="SUPFAM" id="SSF54211">
    <property type="entry name" value="Ribosomal protein S5 domain 2-like"/>
    <property type="match status" value="1"/>
</dbReference>
<dbReference type="PROSITE" id="PS01277">
    <property type="entry name" value="RIBONUCLEASE_PH"/>
    <property type="match status" value="1"/>
</dbReference>
<protein>
    <recommendedName>
        <fullName evidence="1">Ribonuclease PH</fullName>
        <shortName evidence="1">RNase PH</shortName>
        <ecNumber evidence="1">2.7.7.56</ecNumber>
    </recommendedName>
    <alternativeName>
        <fullName evidence="1">tRNA nucleotidyltransferase</fullName>
    </alternativeName>
</protein>
<feature type="chain" id="PRO_0000139914" description="Ribonuclease PH">
    <location>
        <begin position="1"/>
        <end position="242"/>
    </location>
</feature>
<feature type="binding site" evidence="1">
    <location>
        <position position="89"/>
    </location>
    <ligand>
        <name>phosphate</name>
        <dbReference type="ChEBI" id="CHEBI:43474"/>
        <note>substrate</note>
    </ligand>
</feature>
<feature type="binding site" evidence="1">
    <location>
        <begin position="127"/>
        <end position="129"/>
    </location>
    <ligand>
        <name>phosphate</name>
        <dbReference type="ChEBI" id="CHEBI:43474"/>
        <note>substrate</note>
    </ligand>
</feature>
<proteinExistence type="inferred from homology"/>
<sequence>MPDYIRISRAADSLRDIKITPHFLPHTDGSCLIECGNTKVICTASIDENVPPFLRGKNQGWVTAEYGMLPASTASRMLREASAGKQSGRTQEIQRLIGRSLRAVVDMEKLGERQILIDCDVIQADGGTRTASITGAFVALQIAVGKLVSDGILSENPIREAVAAVSVGVVNGVPLLDLDYPEDSGCDSDVNIVMTASGKIIEIQGTAEDAPFSLDELGKLVALAQKGIGELLQHQQNALSAA</sequence>